<protein>
    <recommendedName>
        <fullName evidence="1">Putative membrane protein insertion efficiency factor</fullName>
    </recommendedName>
</protein>
<accession>A6X0W8</accession>
<comment type="function">
    <text evidence="1">Could be involved in insertion of integral membrane proteins into the membrane.</text>
</comment>
<comment type="subcellular location">
    <subcellularLocation>
        <location evidence="1">Cell inner membrane</location>
        <topology evidence="1">Peripheral membrane protein</topology>
        <orientation evidence="1">Cytoplasmic side</orientation>
    </subcellularLocation>
</comment>
<comment type="similarity">
    <text evidence="1">Belongs to the UPF0161 family.</text>
</comment>
<evidence type="ECO:0000255" key="1">
    <source>
        <dbReference type="HAMAP-Rule" id="MF_00386"/>
    </source>
</evidence>
<proteinExistence type="inferred from homology"/>
<sequence>MCSCGKNRAGEGAPKRYSRNFTDPWRKTPGRVIGTSFVRFYQVTLSSLIGNSCRHLPTCSEYAYEAIARHGLWSGGWMGLFRVVRCGPFGTHGFDPVPRALSSDLKWYLPWRYWRCSAS</sequence>
<dbReference type="EMBL" id="CP000758">
    <property type="protein sequence ID" value="ABS14872.1"/>
    <property type="molecule type" value="Genomic_DNA"/>
</dbReference>
<dbReference type="RefSeq" id="WP_012092051.1">
    <property type="nucleotide sequence ID" value="NC_009667.1"/>
</dbReference>
<dbReference type="STRING" id="439375.Oant_2156"/>
<dbReference type="KEGG" id="oan:Oant_2156"/>
<dbReference type="PATRIC" id="fig|439375.7.peg.2264"/>
<dbReference type="eggNOG" id="COG0759">
    <property type="taxonomic scope" value="Bacteria"/>
</dbReference>
<dbReference type="HOGENOM" id="CLU_144811_0_1_5"/>
<dbReference type="Proteomes" id="UP000002301">
    <property type="component" value="Chromosome 1"/>
</dbReference>
<dbReference type="GO" id="GO:0005886">
    <property type="term" value="C:plasma membrane"/>
    <property type="evidence" value="ECO:0007669"/>
    <property type="project" value="UniProtKB-SubCell"/>
</dbReference>
<dbReference type="HAMAP" id="MF_00386">
    <property type="entry name" value="UPF0161_YidD"/>
    <property type="match status" value="1"/>
</dbReference>
<dbReference type="InterPro" id="IPR002696">
    <property type="entry name" value="Membr_insert_effic_factor_YidD"/>
</dbReference>
<dbReference type="NCBIfam" id="TIGR00278">
    <property type="entry name" value="membrane protein insertion efficiency factor YidD"/>
    <property type="match status" value="1"/>
</dbReference>
<dbReference type="PANTHER" id="PTHR33383">
    <property type="entry name" value="MEMBRANE PROTEIN INSERTION EFFICIENCY FACTOR-RELATED"/>
    <property type="match status" value="1"/>
</dbReference>
<dbReference type="PANTHER" id="PTHR33383:SF1">
    <property type="entry name" value="MEMBRANE PROTEIN INSERTION EFFICIENCY FACTOR-RELATED"/>
    <property type="match status" value="1"/>
</dbReference>
<dbReference type="Pfam" id="PF01809">
    <property type="entry name" value="YidD"/>
    <property type="match status" value="1"/>
</dbReference>
<dbReference type="SMART" id="SM01234">
    <property type="entry name" value="Haemolytic"/>
    <property type="match status" value="1"/>
</dbReference>
<organism>
    <name type="scientific">Brucella anthropi (strain ATCC 49188 / DSM 6882 / CCUG 24695 / JCM 21032 / LMG 3331 / NBRC 15819 / NCTC 12168 / Alc 37)</name>
    <name type="common">Ochrobactrum anthropi</name>
    <dbReference type="NCBI Taxonomy" id="439375"/>
    <lineage>
        <taxon>Bacteria</taxon>
        <taxon>Pseudomonadati</taxon>
        <taxon>Pseudomonadota</taxon>
        <taxon>Alphaproteobacteria</taxon>
        <taxon>Hyphomicrobiales</taxon>
        <taxon>Brucellaceae</taxon>
        <taxon>Brucella/Ochrobactrum group</taxon>
        <taxon>Brucella</taxon>
    </lineage>
</organism>
<gene>
    <name type="ordered locus">Oant_2156</name>
</gene>
<feature type="chain" id="PRO_1000013106" description="Putative membrane protein insertion efficiency factor">
    <location>
        <begin position="1"/>
        <end position="119"/>
    </location>
</feature>
<name>YIDD_BRUA4</name>
<keyword id="KW-0997">Cell inner membrane</keyword>
<keyword id="KW-1003">Cell membrane</keyword>
<keyword id="KW-0472">Membrane</keyword>
<keyword id="KW-1185">Reference proteome</keyword>
<reference key="1">
    <citation type="journal article" date="2011" name="J. Bacteriol.">
        <title>Genome of Ochrobactrum anthropi ATCC 49188 T, a versatile opportunistic pathogen and symbiont of several eukaryotic hosts.</title>
        <authorList>
            <person name="Chain P.S."/>
            <person name="Lang D.M."/>
            <person name="Comerci D.J."/>
            <person name="Malfatti S.A."/>
            <person name="Vergez L.M."/>
            <person name="Shin M."/>
            <person name="Ugalde R.A."/>
            <person name="Garcia E."/>
            <person name="Tolmasky M.E."/>
        </authorList>
    </citation>
    <scope>NUCLEOTIDE SEQUENCE [LARGE SCALE GENOMIC DNA]</scope>
    <source>
        <strain>ATCC 49188 / DSM 6882 / CCUG 24695 / JCM 21032 / LMG 3331 / NBRC 15819 / NCTC 12168 / Alc 37</strain>
    </source>
</reference>